<evidence type="ECO:0000255" key="1">
    <source>
        <dbReference type="HAMAP-Rule" id="MF_01366"/>
    </source>
</evidence>
<evidence type="ECO:0000305" key="2"/>
<proteinExistence type="inferred from homology"/>
<dbReference type="EMBL" id="CP000910">
    <property type="protein sequence ID" value="ABY23473.1"/>
    <property type="molecule type" value="Genomic_DNA"/>
</dbReference>
<dbReference type="RefSeq" id="WP_012245145.1">
    <property type="nucleotide sequence ID" value="NC_010168.1"/>
</dbReference>
<dbReference type="SMR" id="A9WMG0"/>
<dbReference type="STRING" id="288705.RSal33209_1737"/>
<dbReference type="KEGG" id="rsa:RSal33209_1737"/>
<dbReference type="eggNOG" id="COG0102">
    <property type="taxonomic scope" value="Bacteria"/>
</dbReference>
<dbReference type="HOGENOM" id="CLU_082184_2_2_11"/>
<dbReference type="Proteomes" id="UP000002007">
    <property type="component" value="Chromosome"/>
</dbReference>
<dbReference type="GO" id="GO:0022625">
    <property type="term" value="C:cytosolic large ribosomal subunit"/>
    <property type="evidence" value="ECO:0007669"/>
    <property type="project" value="TreeGrafter"/>
</dbReference>
<dbReference type="GO" id="GO:0003729">
    <property type="term" value="F:mRNA binding"/>
    <property type="evidence" value="ECO:0007669"/>
    <property type="project" value="TreeGrafter"/>
</dbReference>
<dbReference type="GO" id="GO:0003735">
    <property type="term" value="F:structural constituent of ribosome"/>
    <property type="evidence" value="ECO:0007669"/>
    <property type="project" value="InterPro"/>
</dbReference>
<dbReference type="GO" id="GO:0017148">
    <property type="term" value="P:negative regulation of translation"/>
    <property type="evidence" value="ECO:0007669"/>
    <property type="project" value="TreeGrafter"/>
</dbReference>
<dbReference type="GO" id="GO:0006412">
    <property type="term" value="P:translation"/>
    <property type="evidence" value="ECO:0007669"/>
    <property type="project" value="UniProtKB-UniRule"/>
</dbReference>
<dbReference type="CDD" id="cd00392">
    <property type="entry name" value="Ribosomal_L13"/>
    <property type="match status" value="1"/>
</dbReference>
<dbReference type="FunFam" id="3.90.1180.10:FF:000001">
    <property type="entry name" value="50S ribosomal protein L13"/>
    <property type="match status" value="1"/>
</dbReference>
<dbReference type="Gene3D" id="3.90.1180.10">
    <property type="entry name" value="Ribosomal protein L13"/>
    <property type="match status" value="1"/>
</dbReference>
<dbReference type="HAMAP" id="MF_01366">
    <property type="entry name" value="Ribosomal_uL13"/>
    <property type="match status" value="1"/>
</dbReference>
<dbReference type="InterPro" id="IPR005822">
    <property type="entry name" value="Ribosomal_uL13"/>
</dbReference>
<dbReference type="InterPro" id="IPR005823">
    <property type="entry name" value="Ribosomal_uL13_bac-type"/>
</dbReference>
<dbReference type="InterPro" id="IPR036899">
    <property type="entry name" value="Ribosomal_uL13_sf"/>
</dbReference>
<dbReference type="NCBIfam" id="TIGR01066">
    <property type="entry name" value="rplM_bact"/>
    <property type="match status" value="1"/>
</dbReference>
<dbReference type="PANTHER" id="PTHR11545:SF2">
    <property type="entry name" value="LARGE RIBOSOMAL SUBUNIT PROTEIN UL13M"/>
    <property type="match status" value="1"/>
</dbReference>
<dbReference type="PANTHER" id="PTHR11545">
    <property type="entry name" value="RIBOSOMAL PROTEIN L13"/>
    <property type="match status" value="1"/>
</dbReference>
<dbReference type="Pfam" id="PF00572">
    <property type="entry name" value="Ribosomal_L13"/>
    <property type="match status" value="1"/>
</dbReference>
<dbReference type="PIRSF" id="PIRSF002181">
    <property type="entry name" value="Ribosomal_L13"/>
    <property type="match status" value="1"/>
</dbReference>
<dbReference type="SUPFAM" id="SSF52161">
    <property type="entry name" value="Ribosomal protein L13"/>
    <property type="match status" value="1"/>
</dbReference>
<name>RL13_RENSM</name>
<protein>
    <recommendedName>
        <fullName evidence="1">Large ribosomal subunit protein uL13</fullName>
    </recommendedName>
    <alternativeName>
        <fullName evidence="2">50S ribosomal protein L13</fullName>
    </alternativeName>
</protein>
<keyword id="KW-1185">Reference proteome</keyword>
<keyword id="KW-0687">Ribonucleoprotein</keyword>
<keyword id="KW-0689">Ribosomal protein</keyword>
<accession>A9WMG0</accession>
<organism>
    <name type="scientific">Renibacterium salmoninarum (strain ATCC 33209 / DSM 20767 / JCM 11484 / NBRC 15589 / NCIMB 2235)</name>
    <dbReference type="NCBI Taxonomy" id="288705"/>
    <lineage>
        <taxon>Bacteria</taxon>
        <taxon>Bacillati</taxon>
        <taxon>Actinomycetota</taxon>
        <taxon>Actinomycetes</taxon>
        <taxon>Micrococcales</taxon>
        <taxon>Micrococcaceae</taxon>
        <taxon>Renibacterium</taxon>
    </lineage>
</organism>
<sequence>MRTYTPKPGDINRQWHVIDATDVVLGRLASQTATLLRGKHKPTFAPHMDMGDFVIIINAEKVALTGAKLEQKRAYRHSGYPGGLSSVNYAELLEKNPVRAVEKAIKGMLPKTSLAAQQLSKLKVYRGAEHPHAAQQPKTFEITQVAQ</sequence>
<comment type="function">
    <text evidence="1">This protein is one of the early assembly proteins of the 50S ribosomal subunit, although it is not seen to bind rRNA by itself. It is important during the early stages of 50S assembly.</text>
</comment>
<comment type="subunit">
    <text evidence="1">Part of the 50S ribosomal subunit.</text>
</comment>
<comment type="similarity">
    <text evidence="1">Belongs to the universal ribosomal protein uL13 family.</text>
</comment>
<reference key="1">
    <citation type="journal article" date="2008" name="J. Bacteriol.">
        <title>Genome sequence of the fish pathogen Renibacterium salmoninarum suggests reductive evolution away from an environmental Arthrobacter ancestor.</title>
        <authorList>
            <person name="Wiens G.D."/>
            <person name="Rockey D.D."/>
            <person name="Wu Z."/>
            <person name="Chang J."/>
            <person name="Levy R."/>
            <person name="Crane S."/>
            <person name="Chen D.S."/>
            <person name="Capri G.R."/>
            <person name="Burnett J.R."/>
            <person name="Sudheesh P.S."/>
            <person name="Schipma M.J."/>
            <person name="Burd H."/>
            <person name="Bhattacharyya A."/>
            <person name="Rhodes L.D."/>
            <person name="Kaul R."/>
            <person name="Strom M.S."/>
        </authorList>
    </citation>
    <scope>NUCLEOTIDE SEQUENCE [LARGE SCALE GENOMIC DNA]</scope>
    <source>
        <strain>ATCC 33209 / DSM 20767 / JCM 11484 / NBRC 15589 / NCIMB 2235</strain>
    </source>
</reference>
<feature type="chain" id="PRO_1000087100" description="Large ribosomal subunit protein uL13">
    <location>
        <begin position="1"/>
        <end position="147"/>
    </location>
</feature>
<gene>
    <name evidence="1" type="primary">rplM</name>
    <name type="ordered locus">RSal33209_1737</name>
</gene>